<proteinExistence type="evidence at protein level"/>
<name>SCPDL_RAT</name>
<organism>
    <name type="scientific">Rattus norvegicus</name>
    <name type="common">Rat</name>
    <dbReference type="NCBI Taxonomy" id="10116"/>
    <lineage>
        <taxon>Eukaryota</taxon>
        <taxon>Metazoa</taxon>
        <taxon>Chordata</taxon>
        <taxon>Craniata</taxon>
        <taxon>Vertebrata</taxon>
        <taxon>Euteleostomi</taxon>
        <taxon>Mammalia</taxon>
        <taxon>Eutheria</taxon>
        <taxon>Euarchontoglires</taxon>
        <taxon>Glires</taxon>
        <taxon>Rodentia</taxon>
        <taxon>Myomorpha</taxon>
        <taxon>Muroidea</taxon>
        <taxon>Muridae</taxon>
        <taxon>Murinae</taxon>
        <taxon>Rattus</taxon>
    </lineage>
</organism>
<accession>Q6AY30</accession>
<dbReference type="EC" id="1.-.-.-"/>
<dbReference type="EMBL" id="BC079215">
    <property type="protein sequence ID" value="AAH79215.1"/>
    <property type="molecule type" value="mRNA"/>
</dbReference>
<dbReference type="RefSeq" id="NP_001014007.1">
    <property type="nucleotide sequence ID" value="NM_001013985.1"/>
</dbReference>
<dbReference type="RefSeq" id="XP_008768101.2">
    <property type="nucleotide sequence ID" value="XM_008769879.2"/>
</dbReference>
<dbReference type="RefSeq" id="XP_017460149.1">
    <property type="nucleotide sequence ID" value="XM_017604660.1"/>
</dbReference>
<dbReference type="SMR" id="Q6AY30"/>
<dbReference type="BioGRID" id="258053">
    <property type="interactions" value="2"/>
</dbReference>
<dbReference type="FunCoup" id="Q6AY30">
    <property type="interactions" value="819"/>
</dbReference>
<dbReference type="STRING" id="10116.ENSRNOP00000003791"/>
<dbReference type="GlyGen" id="Q6AY30">
    <property type="glycosylation" value="1 site"/>
</dbReference>
<dbReference type="iPTMnet" id="Q6AY30"/>
<dbReference type="PhosphoSitePlus" id="Q6AY30"/>
<dbReference type="jPOST" id="Q6AY30"/>
<dbReference type="PaxDb" id="10116-ENSRNOP00000003791"/>
<dbReference type="Ensembl" id="ENSRNOT00000003791.7">
    <property type="protein sequence ID" value="ENSRNOP00000003791.4"/>
    <property type="gene ID" value="ENSRNOG00000066712.1"/>
</dbReference>
<dbReference type="GeneID" id="305021"/>
<dbReference type="KEGG" id="rno:305021"/>
<dbReference type="UCSC" id="RGD:1311440">
    <property type="organism name" value="rat"/>
</dbReference>
<dbReference type="AGR" id="RGD:1311440"/>
<dbReference type="CTD" id="51097"/>
<dbReference type="RGD" id="1311440">
    <property type="gene designation" value="Sccpdh"/>
</dbReference>
<dbReference type="eggNOG" id="KOG2733">
    <property type="taxonomic scope" value="Eukaryota"/>
</dbReference>
<dbReference type="GeneTree" id="ENSGT00390000004799"/>
<dbReference type="HOGENOM" id="CLU_031002_1_0_1"/>
<dbReference type="InParanoid" id="Q6AY30"/>
<dbReference type="OMA" id="MQLRYHD"/>
<dbReference type="OrthoDB" id="10268090at2759"/>
<dbReference type="PhylomeDB" id="Q6AY30"/>
<dbReference type="TreeFam" id="TF314904"/>
<dbReference type="Reactome" id="R-RNO-114608">
    <property type="pathway name" value="Platelet degranulation"/>
</dbReference>
<dbReference type="PRO" id="PR:Q6AY30"/>
<dbReference type="Proteomes" id="UP000002494">
    <property type="component" value="Chromosome 13"/>
</dbReference>
<dbReference type="Bgee" id="ENSRNOG00000037984">
    <property type="expression patterns" value="Expressed in cerebellum and 18 other cell types or tissues"/>
</dbReference>
<dbReference type="GO" id="GO:0005811">
    <property type="term" value="C:lipid droplet"/>
    <property type="evidence" value="ECO:0000266"/>
    <property type="project" value="RGD"/>
</dbReference>
<dbReference type="GO" id="GO:0016020">
    <property type="term" value="C:membrane"/>
    <property type="evidence" value="ECO:0007669"/>
    <property type="project" value="GOC"/>
</dbReference>
<dbReference type="GO" id="GO:0030496">
    <property type="term" value="C:midbody"/>
    <property type="evidence" value="ECO:0000266"/>
    <property type="project" value="RGD"/>
</dbReference>
<dbReference type="GO" id="GO:0016491">
    <property type="term" value="F:oxidoreductase activity"/>
    <property type="evidence" value="ECO:0007669"/>
    <property type="project" value="UniProtKB-KW"/>
</dbReference>
<dbReference type="GO" id="GO:0009247">
    <property type="term" value="P:glycolipid biosynthetic process"/>
    <property type="evidence" value="ECO:0000318"/>
    <property type="project" value="GO_Central"/>
</dbReference>
<dbReference type="FunFam" id="3.40.50.720:FF:000178">
    <property type="entry name" value="Saccharopine dehydrogenase-like oxidoreductase"/>
    <property type="match status" value="1"/>
</dbReference>
<dbReference type="Gene3D" id="3.40.50.720">
    <property type="entry name" value="NAD(P)-binding Rossmann-like Domain"/>
    <property type="match status" value="1"/>
</dbReference>
<dbReference type="InterPro" id="IPR036291">
    <property type="entry name" value="NAD(P)-bd_dom_sf"/>
</dbReference>
<dbReference type="InterPro" id="IPR051276">
    <property type="entry name" value="Saccharopine_DH-like_oxidrdct"/>
</dbReference>
<dbReference type="InterPro" id="IPR005097">
    <property type="entry name" value="Sacchrp_dh_NADP-bd"/>
</dbReference>
<dbReference type="PANTHER" id="PTHR12286">
    <property type="entry name" value="SACCHAROPINE DEHYDROGENASE-LIKE OXIDOREDUCTASE"/>
    <property type="match status" value="1"/>
</dbReference>
<dbReference type="PANTHER" id="PTHR12286:SF5">
    <property type="entry name" value="SACCHAROPINE DEHYDROGENASE-LIKE OXIDOREDUCTASE"/>
    <property type="match status" value="1"/>
</dbReference>
<dbReference type="Pfam" id="PF03435">
    <property type="entry name" value="Sacchrp_dh_NADP"/>
    <property type="match status" value="1"/>
</dbReference>
<dbReference type="SUPFAM" id="SSF51735">
    <property type="entry name" value="NAD(P)-binding Rossmann-fold domains"/>
    <property type="match status" value="1"/>
</dbReference>
<keyword id="KW-0007">Acetylation</keyword>
<keyword id="KW-0560">Oxidoreductase</keyword>
<keyword id="KW-0597">Phosphoprotein</keyword>
<keyword id="KW-1185">Reference proteome</keyword>
<feature type="initiator methionine" description="Removed" evidence="1">
    <location>
        <position position="1"/>
    </location>
</feature>
<feature type="chain" id="PRO_0000212843" description="Saccharopine dehydrogenase-like oxidoreductase">
    <location>
        <begin position="2"/>
        <end position="429"/>
    </location>
</feature>
<feature type="modified residue" description="N-acetylalanine" evidence="1">
    <location>
        <position position="2"/>
    </location>
</feature>
<feature type="modified residue" description="Phosphoserine" evidence="3">
    <location>
        <position position="209"/>
    </location>
</feature>
<feature type="modified residue" description="Phosphoserine" evidence="3">
    <location>
        <position position="215"/>
    </location>
</feature>
<feature type="modified residue" description="Phosphoserine" evidence="3">
    <location>
        <position position="217"/>
    </location>
</feature>
<protein>
    <recommendedName>
        <fullName>Saccharopine dehydrogenase-like oxidoreductase</fullName>
        <ecNumber>1.-.-.-</ecNumber>
    </recommendedName>
</protein>
<evidence type="ECO:0000250" key="1">
    <source>
        <dbReference type="UniProtKB" id="Q8NBX0"/>
    </source>
</evidence>
<evidence type="ECO:0000305" key="2"/>
<evidence type="ECO:0007744" key="3">
    <source>
    </source>
</evidence>
<comment type="similarity">
    <text evidence="2">Belongs to the saccharopine dehydrogenase family.</text>
</comment>
<reference key="1">
    <citation type="journal article" date="2004" name="Genome Res.">
        <title>The status, quality, and expansion of the NIH full-length cDNA project: the Mammalian Gene Collection (MGC).</title>
        <authorList>
            <consortium name="The MGC Project Team"/>
        </authorList>
    </citation>
    <scope>NUCLEOTIDE SEQUENCE [LARGE SCALE MRNA]</scope>
    <source>
        <tissue>Testis</tissue>
    </source>
</reference>
<reference key="2">
    <citation type="journal article" date="2012" name="Nat. Commun.">
        <title>Quantitative maps of protein phosphorylation sites across 14 different rat organs and tissues.</title>
        <authorList>
            <person name="Lundby A."/>
            <person name="Secher A."/>
            <person name="Lage K."/>
            <person name="Nordsborg N.B."/>
            <person name="Dmytriyev A."/>
            <person name="Lundby C."/>
            <person name="Olsen J.V."/>
        </authorList>
    </citation>
    <scope>PHOSPHORYLATION [LARGE SCALE ANALYSIS] AT SER-209; SER-215 AND SER-217</scope>
    <scope>IDENTIFICATION BY MASS SPECTROMETRY [LARGE SCALE ANALYSIS]</scope>
</reference>
<sequence length="429" mass="47088">MATEQRPFQLVVFGASGFTGQFVTEEVAREQMASEQSSRLPWAVAGRSKEKLQQVLEKAAQKLGRATLSSEVGIIICDISNPASLDEMAKKATLVLNCVGPYRFYGEPVVKACIENGTSCIDICGEPQFLELMHVKYHEKAAEKGVYIIGSSGFDSIPADLGVLYTRNQMNGTLTAVESFLTINSGPEGLCIHDGTWKSAIYGFGDKGSLRKLRSVSNLKPVPVIGSKLKRRWPVSYCRELNSYAIPFLGSDMSVVKRTQRYLHENLEDSPVQYAAYITVGGITSVIKLMFAGLFFLFFVKFSIGRQLLVKFPWLFSFGYFSKRGPTQKQMDESSFTMTFFGQGYSHGVSAEKNKPNIRICTQVKGPEAGYVATPIAMVQAAVTFLNDASDLPKGGGVFTPGAAFSRTKLIDRLNQHGIQFSVISSSEV</sequence>
<gene>
    <name type="primary">Sccpdh</name>
</gene>